<protein>
    <recommendedName>
        <fullName evidence="1">Formate--tetrahydrofolate ligase</fullName>
        <ecNumber evidence="1">6.3.4.3</ecNumber>
    </recommendedName>
    <alternativeName>
        <fullName evidence="1">Formyltetrahydrofolate synthetase</fullName>
        <shortName evidence="1">FHS</shortName>
        <shortName evidence="1">FTHFS</shortName>
    </alternativeName>
</protein>
<proteinExistence type="inferred from homology"/>
<reference key="1">
    <citation type="submission" date="2008-05" db="EMBL/GenBank/DDBJ databases">
        <title>Complete genome sequence of Clostridium botulinum E3 str. Alaska E43.</title>
        <authorList>
            <person name="Brinkac L.M."/>
            <person name="Brown J.L."/>
            <person name="Bruce D."/>
            <person name="Detter C."/>
            <person name="Munk C."/>
            <person name="Smith L.A."/>
            <person name="Smith T.J."/>
            <person name="Sutton G."/>
            <person name="Brettin T.S."/>
        </authorList>
    </citation>
    <scope>NUCLEOTIDE SEQUENCE [LARGE SCALE GENOMIC DNA]</scope>
    <source>
        <strain>Alaska E43 / Type E3</strain>
    </source>
</reference>
<evidence type="ECO:0000255" key="1">
    <source>
        <dbReference type="HAMAP-Rule" id="MF_01543"/>
    </source>
</evidence>
<dbReference type="EC" id="6.3.4.3" evidence="1"/>
<dbReference type="EMBL" id="CP001078">
    <property type="protein sequence ID" value="ACD51878.1"/>
    <property type="molecule type" value="Genomic_DNA"/>
</dbReference>
<dbReference type="RefSeq" id="WP_012450144.1">
    <property type="nucleotide sequence ID" value="NC_010723.1"/>
</dbReference>
<dbReference type="SMR" id="B2UXU5"/>
<dbReference type="KEGG" id="cbt:CLH_0166"/>
<dbReference type="HOGENOM" id="CLU_003601_3_3_9"/>
<dbReference type="UniPathway" id="UPA00193"/>
<dbReference type="GO" id="GO:0005524">
    <property type="term" value="F:ATP binding"/>
    <property type="evidence" value="ECO:0007669"/>
    <property type="project" value="UniProtKB-UniRule"/>
</dbReference>
<dbReference type="GO" id="GO:0004329">
    <property type="term" value="F:formate-tetrahydrofolate ligase activity"/>
    <property type="evidence" value="ECO:0007669"/>
    <property type="project" value="UniProtKB-UniRule"/>
</dbReference>
<dbReference type="GO" id="GO:0035999">
    <property type="term" value="P:tetrahydrofolate interconversion"/>
    <property type="evidence" value="ECO:0007669"/>
    <property type="project" value="UniProtKB-UniRule"/>
</dbReference>
<dbReference type="CDD" id="cd00477">
    <property type="entry name" value="FTHFS"/>
    <property type="match status" value="1"/>
</dbReference>
<dbReference type="FunFam" id="3.30.1510.10:FF:000001">
    <property type="entry name" value="Formate--tetrahydrofolate ligase"/>
    <property type="match status" value="1"/>
</dbReference>
<dbReference type="FunFam" id="3.10.410.10:FF:000001">
    <property type="entry name" value="Putative formate--tetrahydrofolate ligase"/>
    <property type="match status" value="1"/>
</dbReference>
<dbReference type="Gene3D" id="3.30.1510.10">
    <property type="entry name" value="Domain 2, N(10)-formyltetrahydrofolate synthetase"/>
    <property type="match status" value="1"/>
</dbReference>
<dbReference type="Gene3D" id="3.10.410.10">
    <property type="entry name" value="Formyltetrahydrofolate synthetase, domain 3"/>
    <property type="match status" value="1"/>
</dbReference>
<dbReference type="Gene3D" id="3.40.50.300">
    <property type="entry name" value="P-loop containing nucleotide triphosphate hydrolases"/>
    <property type="match status" value="1"/>
</dbReference>
<dbReference type="HAMAP" id="MF_01543">
    <property type="entry name" value="FTHFS"/>
    <property type="match status" value="1"/>
</dbReference>
<dbReference type="InterPro" id="IPR000559">
    <property type="entry name" value="Formate_THF_ligase"/>
</dbReference>
<dbReference type="InterPro" id="IPR020628">
    <property type="entry name" value="Formate_THF_ligase_CS"/>
</dbReference>
<dbReference type="InterPro" id="IPR027417">
    <property type="entry name" value="P-loop_NTPase"/>
</dbReference>
<dbReference type="NCBIfam" id="NF010030">
    <property type="entry name" value="PRK13505.1"/>
    <property type="match status" value="1"/>
</dbReference>
<dbReference type="Pfam" id="PF01268">
    <property type="entry name" value="FTHFS"/>
    <property type="match status" value="1"/>
</dbReference>
<dbReference type="SUPFAM" id="SSF52540">
    <property type="entry name" value="P-loop containing nucleoside triphosphate hydrolases"/>
    <property type="match status" value="1"/>
</dbReference>
<dbReference type="PROSITE" id="PS00721">
    <property type="entry name" value="FTHFS_1"/>
    <property type="match status" value="1"/>
</dbReference>
<dbReference type="PROSITE" id="PS00722">
    <property type="entry name" value="FTHFS_2"/>
    <property type="match status" value="1"/>
</dbReference>
<organism>
    <name type="scientific">Clostridium botulinum (strain Alaska E43 / Type E3)</name>
    <dbReference type="NCBI Taxonomy" id="508767"/>
    <lineage>
        <taxon>Bacteria</taxon>
        <taxon>Bacillati</taxon>
        <taxon>Bacillota</taxon>
        <taxon>Clostridia</taxon>
        <taxon>Eubacteriales</taxon>
        <taxon>Clostridiaceae</taxon>
        <taxon>Clostridium</taxon>
    </lineage>
</organism>
<comment type="catalytic activity">
    <reaction evidence="1">
        <text>(6S)-5,6,7,8-tetrahydrofolate + formate + ATP = (6R)-10-formyltetrahydrofolate + ADP + phosphate</text>
        <dbReference type="Rhea" id="RHEA:20221"/>
        <dbReference type="ChEBI" id="CHEBI:15740"/>
        <dbReference type="ChEBI" id="CHEBI:30616"/>
        <dbReference type="ChEBI" id="CHEBI:43474"/>
        <dbReference type="ChEBI" id="CHEBI:57453"/>
        <dbReference type="ChEBI" id="CHEBI:195366"/>
        <dbReference type="ChEBI" id="CHEBI:456216"/>
        <dbReference type="EC" id="6.3.4.3"/>
    </reaction>
</comment>
<comment type="pathway">
    <text evidence="1">One-carbon metabolism; tetrahydrofolate interconversion.</text>
</comment>
<comment type="similarity">
    <text evidence="1">Belongs to the formate--tetrahydrofolate ligase family.</text>
</comment>
<sequence length="556" mass="60263">MKTDIEIAQEAEMLHIRNIAEKLGLDEEDIEYYGKYKCKISLDVYNKVKNNRDGKLVLVTAINPTPAGEGKSTVTVGLGDALNKMGKNTVIALREPSLGPVFGIKGGAAGGGYAQVVPMEDINLHFTGDMHAITSANNLLSAAIDNHIHQGNNLRIDSRRIIFKRVMDMNDRALRKIIVGMGGKINGFVREDGFTITVASEIMAILCLASDLEDLKHRMGDILIAYDLDGNPVYAKQLEIQGAMALLMKDAIKPNLVQTLENTPALIHGGPFANIAHGCNSIMATKLSLKLGDIVVTEAGFGADLGAEKFFDIKCRYGNLKPCCVVIVATIRALKHHGGVAKADLNIPNVEALRLGIANLEKQIENIKKFNVEPVVAINKFVSDSDEEVEFIKEFCEKLGVKVALSDVWAKGGDGGIELGEAVLDVIEKDKSSFKTLYKADNTIEEKILTIAKEIYGADGVVYSNEAKKQIGELVKFNLDKLPICMAKTQYSLSDNPNLLAKPSGFNINVQEIRVSNGAGFIVVQTGNIMTMPGLPKVPAANKMDVLKDGEIVGLF</sequence>
<gene>
    <name evidence="1" type="primary">fhs</name>
    <name type="ordered locus">CLH_0166</name>
</gene>
<feature type="chain" id="PRO_1000146676" description="Formate--tetrahydrofolate ligase">
    <location>
        <begin position="1"/>
        <end position="556"/>
    </location>
</feature>
<feature type="binding site" evidence="1">
    <location>
        <begin position="65"/>
        <end position="72"/>
    </location>
    <ligand>
        <name>ATP</name>
        <dbReference type="ChEBI" id="CHEBI:30616"/>
    </ligand>
</feature>
<accession>B2UXU5</accession>
<name>FTHS_CLOBA</name>
<keyword id="KW-0067">ATP-binding</keyword>
<keyword id="KW-0436">Ligase</keyword>
<keyword id="KW-0547">Nucleotide-binding</keyword>
<keyword id="KW-0554">One-carbon metabolism</keyword>